<protein>
    <recommendedName>
        <fullName evidence="1">Small ribosomal subunit protein uS3</fullName>
    </recommendedName>
    <alternativeName>
        <fullName evidence="2">30S ribosomal protein S3</fullName>
    </alternativeName>
</protein>
<organism>
    <name type="scientific">Exiguobacterium sibiricum (strain DSM 17290 / CCUG 55495 / CIP 109462 / JCM 13490 / 255-15)</name>
    <dbReference type="NCBI Taxonomy" id="262543"/>
    <lineage>
        <taxon>Bacteria</taxon>
        <taxon>Bacillati</taxon>
        <taxon>Bacillota</taxon>
        <taxon>Bacilli</taxon>
        <taxon>Bacillales</taxon>
        <taxon>Bacillales Family XII. Incertae Sedis</taxon>
        <taxon>Exiguobacterium</taxon>
    </lineage>
</organism>
<evidence type="ECO:0000255" key="1">
    <source>
        <dbReference type="HAMAP-Rule" id="MF_01309"/>
    </source>
</evidence>
<evidence type="ECO:0000305" key="2"/>
<gene>
    <name evidence="1" type="primary">rpsC</name>
    <name type="ordered locus">Exig_0102</name>
</gene>
<accession>B1YGV6</accession>
<dbReference type="EMBL" id="CP001022">
    <property type="protein sequence ID" value="ACB59589.1"/>
    <property type="molecule type" value="Genomic_DNA"/>
</dbReference>
<dbReference type="RefSeq" id="WP_012369015.1">
    <property type="nucleotide sequence ID" value="NC_010556.1"/>
</dbReference>
<dbReference type="SMR" id="B1YGV6"/>
<dbReference type="STRING" id="262543.Exig_0102"/>
<dbReference type="KEGG" id="esi:Exig_0102"/>
<dbReference type="eggNOG" id="COG0092">
    <property type="taxonomic scope" value="Bacteria"/>
</dbReference>
<dbReference type="HOGENOM" id="CLU_058591_0_2_9"/>
<dbReference type="OrthoDB" id="9806396at2"/>
<dbReference type="Proteomes" id="UP000001681">
    <property type="component" value="Chromosome"/>
</dbReference>
<dbReference type="GO" id="GO:0022627">
    <property type="term" value="C:cytosolic small ribosomal subunit"/>
    <property type="evidence" value="ECO:0007669"/>
    <property type="project" value="TreeGrafter"/>
</dbReference>
<dbReference type="GO" id="GO:0003729">
    <property type="term" value="F:mRNA binding"/>
    <property type="evidence" value="ECO:0007669"/>
    <property type="project" value="UniProtKB-UniRule"/>
</dbReference>
<dbReference type="GO" id="GO:0019843">
    <property type="term" value="F:rRNA binding"/>
    <property type="evidence" value="ECO:0007669"/>
    <property type="project" value="UniProtKB-UniRule"/>
</dbReference>
<dbReference type="GO" id="GO:0003735">
    <property type="term" value="F:structural constituent of ribosome"/>
    <property type="evidence" value="ECO:0007669"/>
    <property type="project" value="InterPro"/>
</dbReference>
<dbReference type="GO" id="GO:0006412">
    <property type="term" value="P:translation"/>
    <property type="evidence" value="ECO:0007669"/>
    <property type="project" value="UniProtKB-UniRule"/>
</dbReference>
<dbReference type="CDD" id="cd02412">
    <property type="entry name" value="KH-II_30S_S3"/>
    <property type="match status" value="1"/>
</dbReference>
<dbReference type="FunFam" id="3.30.300.20:FF:000001">
    <property type="entry name" value="30S ribosomal protein S3"/>
    <property type="match status" value="1"/>
</dbReference>
<dbReference type="Gene3D" id="3.30.300.20">
    <property type="match status" value="1"/>
</dbReference>
<dbReference type="Gene3D" id="3.30.1140.32">
    <property type="entry name" value="Ribosomal protein S3, C-terminal domain"/>
    <property type="match status" value="1"/>
</dbReference>
<dbReference type="HAMAP" id="MF_01309_B">
    <property type="entry name" value="Ribosomal_uS3_B"/>
    <property type="match status" value="1"/>
</dbReference>
<dbReference type="InterPro" id="IPR004087">
    <property type="entry name" value="KH_dom"/>
</dbReference>
<dbReference type="InterPro" id="IPR015946">
    <property type="entry name" value="KH_dom-like_a/b"/>
</dbReference>
<dbReference type="InterPro" id="IPR004044">
    <property type="entry name" value="KH_dom_type_2"/>
</dbReference>
<dbReference type="InterPro" id="IPR009019">
    <property type="entry name" value="KH_sf_prok-type"/>
</dbReference>
<dbReference type="InterPro" id="IPR036419">
    <property type="entry name" value="Ribosomal_S3_C_sf"/>
</dbReference>
<dbReference type="InterPro" id="IPR005704">
    <property type="entry name" value="Ribosomal_uS3_bac-typ"/>
</dbReference>
<dbReference type="InterPro" id="IPR001351">
    <property type="entry name" value="Ribosomal_uS3_C"/>
</dbReference>
<dbReference type="InterPro" id="IPR018280">
    <property type="entry name" value="Ribosomal_uS3_CS"/>
</dbReference>
<dbReference type="NCBIfam" id="TIGR01009">
    <property type="entry name" value="rpsC_bact"/>
    <property type="match status" value="1"/>
</dbReference>
<dbReference type="PANTHER" id="PTHR11760">
    <property type="entry name" value="30S/40S RIBOSOMAL PROTEIN S3"/>
    <property type="match status" value="1"/>
</dbReference>
<dbReference type="PANTHER" id="PTHR11760:SF19">
    <property type="entry name" value="SMALL RIBOSOMAL SUBUNIT PROTEIN US3C"/>
    <property type="match status" value="1"/>
</dbReference>
<dbReference type="Pfam" id="PF07650">
    <property type="entry name" value="KH_2"/>
    <property type="match status" value="1"/>
</dbReference>
<dbReference type="Pfam" id="PF00189">
    <property type="entry name" value="Ribosomal_S3_C"/>
    <property type="match status" value="1"/>
</dbReference>
<dbReference type="SMART" id="SM00322">
    <property type="entry name" value="KH"/>
    <property type="match status" value="1"/>
</dbReference>
<dbReference type="SUPFAM" id="SSF54814">
    <property type="entry name" value="Prokaryotic type KH domain (KH-domain type II)"/>
    <property type="match status" value="1"/>
</dbReference>
<dbReference type="SUPFAM" id="SSF54821">
    <property type="entry name" value="Ribosomal protein S3 C-terminal domain"/>
    <property type="match status" value="1"/>
</dbReference>
<dbReference type="PROSITE" id="PS50823">
    <property type="entry name" value="KH_TYPE_2"/>
    <property type="match status" value="1"/>
</dbReference>
<dbReference type="PROSITE" id="PS00548">
    <property type="entry name" value="RIBOSOMAL_S3"/>
    <property type="match status" value="1"/>
</dbReference>
<proteinExistence type="inferred from homology"/>
<sequence length="218" mass="24203">MGQKINPTGLRVGIIKDWESRWFADKDYADLLHEDYVVREYIEKRLKDASVSKVEIERAANRLNISLHTAKPGMVIGKGGSEIETLRTDITNLAKGKRVHVNVVEVKNPDAVAKLVAENIARQLEGRVSFRRAMKQSIQRSMRSGIKGIKTEVSGRLGGADIARSEKYSEGTVPLHTLRADIDYGTAEADTTYGKIGVKVWLHHGEVLPTKKAASNEQ</sequence>
<comment type="function">
    <text evidence="1">Binds the lower part of the 30S subunit head. Binds mRNA in the 70S ribosome, positioning it for translation.</text>
</comment>
<comment type="subunit">
    <text evidence="1">Part of the 30S ribosomal subunit. Forms a tight complex with proteins S10 and S14.</text>
</comment>
<comment type="similarity">
    <text evidence="1">Belongs to the universal ribosomal protein uS3 family.</text>
</comment>
<keyword id="KW-1185">Reference proteome</keyword>
<keyword id="KW-0687">Ribonucleoprotein</keyword>
<keyword id="KW-0689">Ribosomal protein</keyword>
<keyword id="KW-0694">RNA-binding</keyword>
<keyword id="KW-0699">rRNA-binding</keyword>
<reference key="1">
    <citation type="submission" date="2008-04" db="EMBL/GenBank/DDBJ databases">
        <title>Complete sequence of chromosome of Exiguobacterium sibiricum 255-15.</title>
        <authorList>
            <consortium name="US DOE Joint Genome Institute"/>
            <person name="Copeland A."/>
            <person name="Lucas S."/>
            <person name="Lapidus A."/>
            <person name="Glavina del Rio T."/>
            <person name="Dalin E."/>
            <person name="Tice H."/>
            <person name="Bruce D."/>
            <person name="Goodwin L."/>
            <person name="Pitluck S."/>
            <person name="Kiss H."/>
            <person name="Chertkov O."/>
            <person name="Monk C."/>
            <person name="Brettin T."/>
            <person name="Detter J.C."/>
            <person name="Han C."/>
            <person name="Kuske C.R."/>
            <person name="Schmutz J."/>
            <person name="Larimer F."/>
            <person name="Land M."/>
            <person name="Hauser L."/>
            <person name="Kyrpides N."/>
            <person name="Mikhailova N."/>
            <person name="Vishnivetskaya T."/>
            <person name="Rodrigues D.F."/>
            <person name="Gilichinsky D."/>
            <person name="Tiedje J."/>
            <person name="Richardson P."/>
        </authorList>
    </citation>
    <scope>NUCLEOTIDE SEQUENCE [LARGE SCALE GENOMIC DNA]</scope>
    <source>
        <strain>DSM 17290 / CCUG 55495 / CIP 109462 / JCM 13490 / 255-15</strain>
    </source>
</reference>
<feature type="chain" id="PRO_1000140970" description="Small ribosomal subunit protein uS3">
    <location>
        <begin position="1"/>
        <end position="218"/>
    </location>
</feature>
<feature type="domain" description="KH type-2" evidence="1">
    <location>
        <begin position="38"/>
        <end position="107"/>
    </location>
</feature>
<name>RS3_EXIS2</name>